<comment type="function">
    <text evidence="1">The RuvA-RuvB-RuvC complex processes Holliday junction (HJ) DNA during genetic recombination and DNA repair, while the RuvA-RuvB complex plays an important role in the rescue of blocked DNA replication forks via replication fork reversal (RFR). RuvA specifically binds to HJ cruciform DNA, conferring on it an open structure. The RuvB hexamer acts as an ATP-dependent pump, pulling dsDNA into and through the RuvAB complex. HJ branch migration allows RuvC to scan DNA until it finds its consensus sequence, where it cleaves and resolves the cruciform DNA.</text>
</comment>
<comment type="subunit">
    <text evidence="1">Homotetramer. Forms an RuvA(8)-RuvB(12)-Holliday junction (HJ) complex. HJ DNA is sandwiched between 2 RuvA tetramers; dsDNA enters through RuvA and exits via RuvB. An RuvB hexamer assembles on each DNA strand where it exits the tetramer. Each RuvB hexamer is contacted by two RuvA subunits (via domain III) on 2 adjacent RuvB subunits; this complex drives branch migration. In the full resolvosome a probable DNA-RuvA(4)-RuvB(12)-RuvC(2) complex forms which resolves the HJ.</text>
</comment>
<comment type="subcellular location">
    <subcellularLocation>
        <location evidence="1">Cytoplasm</location>
    </subcellularLocation>
</comment>
<comment type="domain">
    <text evidence="1">Has three domains with a flexible linker between the domains II and III and assumes an 'L' shape. Domain III is highly mobile and contacts RuvB.</text>
</comment>
<comment type="similarity">
    <text evidence="1">Belongs to the RuvA family.</text>
</comment>
<evidence type="ECO:0000255" key="1">
    <source>
        <dbReference type="HAMAP-Rule" id="MF_00031"/>
    </source>
</evidence>
<reference key="1">
    <citation type="submission" date="2007-07" db="EMBL/GenBank/DDBJ databases">
        <title>Complete genome sequence of Campylobacter hominis ATCC BAA-381, a commensal isolated from the human gastrointestinal tract.</title>
        <authorList>
            <person name="Fouts D.E."/>
            <person name="Mongodin E.F."/>
            <person name="Puiu D."/>
            <person name="Sebastian Y."/>
            <person name="Miller W.G."/>
            <person name="Mandrell R.E."/>
            <person name="Nelson K.E."/>
        </authorList>
    </citation>
    <scope>NUCLEOTIDE SEQUENCE [LARGE SCALE GENOMIC DNA]</scope>
    <source>
        <strain>ATCC BAA-381 / DSM 21671 / CCUG 45161 / LMG 19568 / NCTC 13146 / CH001A</strain>
    </source>
</reference>
<name>RUVA_CAMHC</name>
<gene>
    <name evidence="1" type="primary">ruvA</name>
    <name type="ordered locus">CHAB381_0573</name>
</gene>
<dbReference type="EMBL" id="CP000776">
    <property type="protein sequence ID" value="ABS51350.1"/>
    <property type="molecule type" value="Genomic_DNA"/>
</dbReference>
<dbReference type="RefSeq" id="WP_012108448.1">
    <property type="nucleotide sequence ID" value="NC_009714.1"/>
</dbReference>
<dbReference type="SMR" id="A7I0X0"/>
<dbReference type="STRING" id="360107.CHAB381_0573"/>
<dbReference type="KEGG" id="cha:CHAB381_0573"/>
<dbReference type="eggNOG" id="COG0632">
    <property type="taxonomic scope" value="Bacteria"/>
</dbReference>
<dbReference type="HOGENOM" id="CLU_087936_3_1_7"/>
<dbReference type="OrthoDB" id="5293449at2"/>
<dbReference type="Proteomes" id="UP000002407">
    <property type="component" value="Chromosome"/>
</dbReference>
<dbReference type="GO" id="GO:0005737">
    <property type="term" value="C:cytoplasm"/>
    <property type="evidence" value="ECO:0007669"/>
    <property type="project" value="UniProtKB-SubCell"/>
</dbReference>
<dbReference type="GO" id="GO:0009379">
    <property type="term" value="C:Holliday junction helicase complex"/>
    <property type="evidence" value="ECO:0007669"/>
    <property type="project" value="InterPro"/>
</dbReference>
<dbReference type="GO" id="GO:0048476">
    <property type="term" value="C:Holliday junction resolvase complex"/>
    <property type="evidence" value="ECO:0007669"/>
    <property type="project" value="UniProtKB-UniRule"/>
</dbReference>
<dbReference type="GO" id="GO:0005524">
    <property type="term" value="F:ATP binding"/>
    <property type="evidence" value="ECO:0007669"/>
    <property type="project" value="InterPro"/>
</dbReference>
<dbReference type="GO" id="GO:0000400">
    <property type="term" value="F:four-way junction DNA binding"/>
    <property type="evidence" value="ECO:0007669"/>
    <property type="project" value="UniProtKB-UniRule"/>
</dbReference>
<dbReference type="GO" id="GO:0009378">
    <property type="term" value="F:four-way junction helicase activity"/>
    <property type="evidence" value="ECO:0007669"/>
    <property type="project" value="InterPro"/>
</dbReference>
<dbReference type="GO" id="GO:0006310">
    <property type="term" value="P:DNA recombination"/>
    <property type="evidence" value="ECO:0007669"/>
    <property type="project" value="UniProtKB-UniRule"/>
</dbReference>
<dbReference type="GO" id="GO:0006281">
    <property type="term" value="P:DNA repair"/>
    <property type="evidence" value="ECO:0007669"/>
    <property type="project" value="UniProtKB-UniRule"/>
</dbReference>
<dbReference type="CDD" id="cd14332">
    <property type="entry name" value="UBA_RuvA_C"/>
    <property type="match status" value="1"/>
</dbReference>
<dbReference type="Gene3D" id="1.10.150.20">
    <property type="entry name" value="5' to 3' exonuclease, C-terminal subdomain"/>
    <property type="match status" value="1"/>
</dbReference>
<dbReference type="Gene3D" id="1.10.8.10">
    <property type="entry name" value="DNA helicase RuvA subunit, C-terminal domain"/>
    <property type="match status" value="1"/>
</dbReference>
<dbReference type="Gene3D" id="2.40.50.140">
    <property type="entry name" value="Nucleic acid-binding proteins"/>
    <property type="match status" value="1"/>
</dbReference>
<dbReference type="HAMAP" id="MF_00031">
    <property type="entry name" value="DNA_HJ_migration_RuvA"/>
    <property type="match status" value="1"/>
</dbReference>
<dbReference type="InterPro" id="IPR013849">
    <property type="entry name" value="DNA_helicase_Holl-junc_RuvA_I"/>
</dbReference>
<dbReference type="InterPro" id="IPR003583">
    <property type="entry name" value="Hlx-hairpin-Hlx_DNA-bd_motif"/>
</dbReference>
<dbReference type="InterPro" id="IPR012340">
    <property type="entry name" value="NA-bd_OB-fold"/>
</dbReference>
<dbReference type="InterPro" id="IPR000085">
    <property type="entry name" value="RuvA"/>
</dbReference>
<dbReference type="InterPro" id="IPR010994">
    <property type="entry name" value="RuvA_2-like"/>
</dbReference>
<dbReference type="InterPro" id="IPR011114">
    <property type="entry name" value="RuvA_C"/>
</dbReference>
<dbReference type="InterPro" id="IPR036267">
    <property type="entry name" value="RuvA_C_sf"/>
</dbReference>
<dbReference type="NCBIfam" id="TIGR00084">
    <property type="entry name" value="ruvA"/>
    <property type="match status" value="1"/>
</dbReference>
<dbReference type="Pfam" id="PF14520">
    <property type="entry name" value="HHH_5"/>
    <property type="match status" value="1"/>
</dbReference>
<dbReference type="Pfam" id="PF07499">
    <property type="entry name" value="RuvA_C"/>
    <property type="match status" value="1"/>
</dbReference>
<dbReference type="Pfam" id="PF01330">
    <property type="entry name" value="RuvA_N"/>
    <property type="match status" value="1"/>
</dbReference>
<dbReference type="SMART" id="SM00278">
    <property type="entry name" value="HhH1"/>
    <property type="match status" value="2"/>
</dbReference>
<dbReference type="SUPFAM" id="SSF46929">
    <property type="entry name" value="DNA helicase RuvA subunit, C-terminal domain"/>
    <property type="match status" value="1"/>
</dbReference>
<dbReference type="SUPFAM" id="SSF50249">
    <property type="entry name" value="Nucleic acid-binding proteins"/>
    <property type="match status" value="1"/>
</dbReference>
<dbReference type="SUPFAM" id="SSF47781">
    <property type="entry name" value="RuvA domain 2-like"/>
    <property type="match status" value="1"/>
</dbReference>
<organism>
    <name type="scientific">Campylobacter hominis (strain ATCC BAA-381 / DSM 21671 / CCUG 45161 / LMG 19568 / NCTC 13146 / CH001A)</name>
    <dbReference type="NCBI Taxonomy" id="360107"/>
    <lineage>
        <taxon>Bacteria</taxon>
        <taxon>Pseudomonadati</taxon>
        <taxon>Campylobacterota</taxon>
        <taxon>Epsilonproteobacteria</taxon>
        <taxon>Campylobacterales</taxon>
        <taxon>Campylobacteraceae</taxon>
        <taxon>Campylobacter</taxon>
    </lineage>
</organism>
<keyword id="KW-0963">Cytoplasm</keyword>
<keyword id="KW-0227">DNA damage</keyword>
<keyword id="KW-0233">DNA recombination</keyword>
<keyword id="KW-0234">DNA repair</keyword>
<keyword id="KW-0238">DNA-binding</keyword>
<keyword id="KW-1185">Reference proteome</keyword>
<protein>
    <recommendedName>
        <fullName evidence="1">Holliday junction branch migration complex subunit RuvA</fullName>
    </recommendedName>
</protein>
<sequence length="184" mass="19996">MIVAVEGIITKKEPTFCVLKTVTGVSYGISISLGCSARINKGEKIELLTAQILREDADLLYGFLDEKEKRMFEMLIKLNGIGANTAMAVCSSLSSDNFLRAIINGDTATLTTVPGIGPKTARRIIAELSDAKIELANDGEQYKIETISALENLGFKRDKINKILLNCKSTNTADLIKEALKKLA</sequence>
<accession>A7I0X0</accession>
<proteinExistence type="inferred from homology"/>
<feature type="chain" id="PRO_1000002423" description="Holliday junction branch migration complex subunit RuvA">
    <location>
        <begin position="1"/>
        <end position="184"/>
    </location>
</feature>
<feature type="region of interest" description="Domain I" evidence="1">
    <location>
        <begin position="1"/>
        <end position="64"/>
    </location>
</feature>
<feature type="region of interest" description="Domain II" evidence="1">
    <location>
        <begin position="65"/>
        <end position="145"/>
    </location>
</feature>
<feature type="region of interest" description="Domain III" evidence="1">
    <location>
        <begin position="145"/>
        <end position="184"/>
    </location>
</feature>
<feature type="region of interest" description="Flexible linker" evidence="1">
    <location>
        <position position="145"/>
    </location>
</feature>